<feature type="chain" id="PRO_0000447999" description="Lectin" evidence="1">
    <location>
        <begin position="1"/>
        <end position="157"/>
    </location>
</feature>
<feature type="disulfide bond" evidence="1">
    <location>
        <begin position="37"/>
        <end position="54"/>
    </location>
</feature>
<keyword id="KW-0903">Direct protein sequencing</keyword>
<keyword id="KW-1015">Disulfide bond</keyword>
<keyword id="KW-0430">Lectin</keyword>
<keyword id="KW-0611">Plant defense</keyword>
<keyword id="KW-0964">Secreted</keyword>
<evidence type="ECO:0000269" key="1">
    <source>
    </source>
</evidence>
<evidence type="ECO:0000303" key="2">
    <source>
    </source>
</evidence>
<evidence type="ECO:0000305" key="3"/>
<reference evidence="3" key="1">
    <citation type="journal article" date="2018" name="Int. J. Biol. Macromol.">
        <title>Coccinia indica agglutinin, a 17kDa PP2 like phloem lectin: Affinity purification, primary structure and formation of self-assembled filaments.</title>
        <authorList>
            <person name="Bobbili K.B."/>
            <person name="Pohlentz G."/>
            <person name="Narahari A."/>
            <person name="Sharma K."/>
            <person name="Surolia A."/>
            <person name="Mormann M."/>
            <person name="Swamy M.J."/>
        </authorList>
    </citation>
    <scope>PROTEIN SEQUENCE</scope>
    <scope>IDENTIFICATION BY MASS SPECTROMETRY</scope>
    <scope>FUNCTION</scope>
    <scope>SUBUNIT</scope>
    <scope>TISSUE SPECIFICITY</scope>
    <scope>DISULFIDE BOND</scope>
    <source>
        <tissue>Fruit</tissue>
    </source>
</reference>
<organism>
    <name type="scientific">Coccinia grandis</name>
    <name type="common">Ivy gourd</name>
    <name type="synonym">Coccinia indica</name>
    <dbReference type="NCBI Taxonomy" id="387127"/>
    <lineage>
        <taxon>Eukaryota</taxon>
        <taxon>Viridiplantae</taxon>
        <taxon>Streptophyta</taxon>
        <taxon>Embryophyta</taxon>
        <taxon>Tracheophyta</taxon>
        <taxon>Spermatophyta</taxon>
        <taxon>Magnoliopsida</taxon>
        <taxon>eudicotyledons</taxon>
        <taxon>Gunneridae</taxon>
        <taxon>Pentapetalae</taxon>
        <taxon>rosids</taxon>
        <taxon>fabids</taxon>
        <taxon>Cucurbitales</taxon>
        <taxon>Cucurbitaceae</taxon>
        <taxon>Benincaseae</taxon>
        <taxon>Coccinia</taxon>
    </lineage>
</organism>
<accession>P0DSP5</accession>
<protein>
    <recommendedName>
        <fullName evidence="2">Lectin</fullName>
    </recommendedName>
    <alternativeName>
        <fullName evidence="2">Agglutinin</fullName>
        <shortName evidence="2">CIA17</shortName>
    </alternativeName>
</protein>
<proteinExistence type="evidence at protein level"/>
<comment type="function">
    <text evidence="1">Binds with high affinity specifically to chito-oligosaccharides. May play a role in plant defense against pathogens by directly binding with the chitin cell wall. Forms filamentous structures at higher concentrations and may promote wound healing by forming filaments with phloem proteins like PP1.</text>
</comment>
<comment type="subunit">
    <text evidence="1">Homodimer.</text>
</comment>
<comment type="subcellular location">
    <subcellularLocation>
        <location evidence="1">Secreted</location>
    </subcellularLocation>
    <text evidence="1">Detected in phloem exudate.</text>
</comment>
<comment type="tissue specificity">
    <text evidence="1">Detected in fruits (at protein level).</text>
</comment>
<comment type="mass spectrometry" mass="17495.0" method="Electrospray" evidence="1"/>
<dbReference type="SMR" id="P0DSP5"/>
<dbReference type="GO" id="GO:0005576">
    <property type="term" value="C:extracellular region"/>
    <property type="evidence" value="ECO:0007669"/>
    <property type="project" value="UniProtKB-SubCell"/>
</dbReference>
<dbReference type="GO" id="GO:0030246">
    <property type="term" value="F:carbohydrate binding"/>
    <property type="evidence" value="ECO:0007669"/>
    <property type="project" value="UniProtKB-KW"/>
</dbReference>
<dbReference type="GO" id="GO:0006952">
    <property type="term" value="P:defense response"/>
    <property type="evidence" value="ECO:0007669"/>
    <property type="project" value="UniProtKB-KW"/>
</dbReference>
<dbReference type="InterPro" id="IPR025886">
    <property type="entry name" value="PP2-like"/>
</dbReference>
<dbReference type="InterPro" id="IPR052147">
    <property type="entry name" value="PP2-like/Lectin"/>
</dbReference>
<dbReference type="PANTHER" id="PTHR48478">
    <property type="entry name" value="LECTIN-LIKE"/>
    <property type="match status" value="1"/>
</dbReference>
<dbReference type="PANTHER" id="PTHR48478:SF1">
    <property type="entry name" value="LECTIN-LIKE"/>
    <property type="match status" value="1"/>
</dbReference>
<dbReference type="Pfam" id="PF14299">
    <property type="entry name" value="PP2"/>
    <property type="match status" value="1"/>
</dbReference>
<sequence length="157" mass="18017">LNQEKLSSTHFLLFPRAATLTWSDDTRYWSWNPVDFCGYQLEEAQLSRVSWFDCRWTVNTTDLKTNVWYNVFLKVQMGSGASGWNTPLNLELEMPNGSKQASQVVLNDRPRDVWFKLQMGNLMVSDSETCGALRMSLYNHQTNWKMGATLGPLALEA</sequence>
<name>LECT_COCGR</name>